<dbReference type="EC" id="2.7.4.14" evidence="1"/>
<dbReference type="EMBL" id="M34568">
    <property type="protein sequence ID" value="AAA33272.1"/>
    <property type="status" value="ALT_INIT"/>
    <property type="molecule type" value="mRNA"/>
</dbReference>
<dbReference type="EMBL" id="AAFI02000102">
    <property type="protein sequence ID" value="EAL63690.1"/>
    <property type="molecule type" value="Genomic_DNA"/>
</dbReference>
<dbReference type="PIR" id="A35235">
    <property type="entry name" value="A35235"/>
</dbReference>
<dbReference type="RefSeq" id="XP_637196.1">
    <property type="nucleotide sequence ID" value="XM_632104.1"/>
</dbReference>
<dbReference type="PDB" id="1QF9">
    <property type="method" value="X-ray"/>
    <property type="resolution" value="1.70 A"/>
    <property type="chains" value="A=2-195"/>
</dbReference>
<dbReference type="PDB" id="1UKE">
    <property type="method" value="X-ray"/>
    <property type="resolution" value="2.20 A"/>
    <property type="chains" value="A=2-195"/>
</dbReference>
<dbReference type="PDB" id="2UKD">
    <property type="method" value="X-ray"/>
    <property type="resolution" value="2.20 A"/>
    <property type="chains" value="A=2-195"/>
</dbReference>
<dbReference type="PDB" id="3UKD">
    <property type="method" value="X-ray"/>
    <property type="resolution" value="1.90 A"/>
    <property type="chains" value="A=2-195"/>
</dbReference>
<dbReference type="PDB" id="4UKD">
    <property type="method" value="X-ray"/>
    <property type="resolution" value="2.00 A"/>
    <property type="chains" value="A=2-195"/>
</dbReference>
<dbReference type="PDB" id="5UKD">
    <property type="method" value="X-ray"/>
    <property type="resolution" value="1.90 A"/>
    <property type="chains" value="A=2-195"/>
</dbReference>
<dbReference type="PDBsum" id="1QF9"/>
<dbReference type="PDBsum" id="1UKE"/>
<dbReference type="PDBsum" id="2UKD"/>
<dbReference type="PDBsum" id="3UKD"/>
<dbReference type="PDBsum" id="4UKD"/>
<dbReference type="PDBsum" id="5UKD"/>
<dbReference type="SMR" id="P20425"/>
<dbReference type="FunCoup" id="P20425">
    <property type="interactions" value="966"/>
</dbReference>
<dbReference type="STRING" id="44689.P20425"/>
<dbReference type="PaxDb" id="44689-DDB0191367"/>
<dbReference type="EnsemblProtists" id="EAL63690">
    <property type="protein sequence ID" value="EAL63690"/>
    <property type="gene ID" value="DDB_G0287495"/>
</dbReference>
<dbReference type="GeneID" id="8626154"/>
<dbReference type="KEGG" id="ddi:DDB_G0287495"/>
<dbReference type="dictyBase" id="DDB_G0287495">
    <property type="gene designation" value="pyrK"/>
</dbReference>
<dbReference type="VEuPathDB" id="AmoebaDB:DDB_G0287495"/>
<dbReference type="eggNOG" id="KOG3079">
    <property type="taxonomic scope" value="Eukaryota"/>
</dbReference>
<dbReference type="HOGENOM" id="CLU_032354_0_3_1"/>
<dbReference type="InParanoid" id="P20425"/>
<dbReference type="OMA" id="EQTMPVI"/>
<dbReference type="PhylomeDB" id="P20425"/>
<dbReference type="BRENDA" id="2.7.4.14">
    <property type="organism ID" value="1939"/>
</dbReference>
<dbReference type="Reactome" id="R-DDI-499943">
    <property type="pathway name" value="Interconversion of nucleotide di- and triphosphates"/>
</dbReference>
<dbReference type="SABIO-RK" id="P20425"/>
<dbReference type="EvolutionaryTrace" id="P20425"/>
<dbReference type="PRO" id="PR:P20425"/>
<dbReference type="Proteomes" id="UP000002195">
    <property type="component" value="Chromosome 5"/>
</dbReference>
<dbReference type="GO" id="GO:0005737">
    <property type="term" value="C:cytoplasm"/>
    <property type="evidence" value="ECO:0000318"/>
    <property type="project" value="GO_Central"/>
</dbReference>
<dbReference type="GO" id="GO:0005634">
    <property type="term" value="C:nucleus"/>
    <property type="evidence" value="ECO:0000318"/>
    <property type="project" value="GO_Central"/>
</dbReference>
<dbReference type="GO" id="GO:0004127">
    <property type="term" value="F:(d)CMP kinase activity"/>
    <property type="evidence" value="ECO:0000314"/>
    <property type="project" value="dictyBase"/>
</dbReference>
<dbReference type="GO" id="GO:0005524">
    <property type="term" value="F:ATP binding"/>
    <property type="evidence" value="ECO:0000314"/>
    <property type="project" value="dictyBase"/>
</dbReference>
<dbReference type="GO" id="GO:0036430">
    <property type="term" value="F:CMP kinase activity"/>
    <property type="evidence" value="ECO:0007669"/>
    <property type="project" value="RHEA"/>
</dbReference>
<dbReference type="GO" id="GO:0036431">
    <property type="term" value="F:dCMP kinase activity"/>
    <property type="evidence" value="ECO:0007669"/>
    <property type="project" value="RHEA"/>
</dbReference>
<dbReference type="GO" id="GO:0000287">
    <property type="term" value="F:magnesium ion binding"/>
    <property type="evidence" value="ECO:0000314"/>
    <property type="project" value="dictyBase"/>
</dbReference>
<dbReference type="GO" id="GO:0016776">
    <property type="term" value="F:phosphotransferase activity, phosphate group as acceptor"/>
    <property type="evidence" value="ECO:0000314"/>
    <property type="project" value="dictyBase"/>
</dbReference>
<dbReference type="GO" id="GO:0033862">
    <property type="term" value="F:UMP kinase activity"/>
    <property type="evidence" value="ECO:0000314"/>
    <property type="project" value="dictyBase"/>
</dbReference>
<dbReference type="GO" id="GO:0006207">
    <property type="term" value="P:'de novo' pyrimidine nucleobase biosynthetic process"/>
    <property type="evidence" value="ECO:0007669"/>
    <property type="project" value="InterPro"/>
</dbReference>
<dbReference type="GO" id="GO:0046705">
    <property type="term" value="P:CDP biosynthetic process"/>
    <property type="evidence" value="ECO:0000314"/>
    <property type="project" value="dictyBase"/>
</dbReference>
<dbReference type="GO" id="GO:0043173">
    <property type="term" value="P:nucleotide salvage"/>
    <property type="evidence" value="ECO:0000314"/>
    <property type="project" value="dictyBase"/>
</dbReference>
<dbReference type="GO" id="GO:0043100">
    <property type="term" value="P:pyrimidine nucleobase salvage"/>
    <property type="evidence" value="ECO:0000314"/>
    <property type="project" value="dictyBase"/>
</dbReference>
<dbReference type="GO" id="GO:0006225">
    <property type="term" value="P:UDP biosynthetic process"/>
    <property type="evidence" value="ECO:0000314"/>
    <property type="project" value="dictyBase"/>
</dbReference>
<dbReference type="CDD" id="cd01428">
    <property type="entry name" value="ADK"/>
    <property type="match status" value="1"/>
</dbReference>
<dbReference type="FunFam" id="3.40.50.300:FF:000315">
    <property type="entry name" value="Adenylate kinase 1"/>
    <property type="match status" value="1"/>
</dbReference>
<dbReference type="Gene3D" id="3.40.50.300">
    <property type="entry name" value="P-loop containing nucleotide triphosphate hydrolases"/>
    <property type="match status" value="1"/>
</dbReference>
<dbReference type="HAMAP" id="MF_00235">
    <property type="entry name" value="Adenylate_kinase_Adk"/>
    <property type="match status" value="1"/>
</dbReference>
<dbReference type="HAMAP" id="MF_03172">
    <property type="entry name" value="Adenylate_kinase_UMP_CMP_kin"/>
    <property type="match status" value="1"/>
</dbReference>
<dbReference type="InterPro" id="IPR000850">
    <property type="entry name" value="Adenylat/UMP-CMP_kin"/>
</dbReference>
<dbReference type="InterPro" id="IPR033690">
    <property type="entry name" value="Adenylat_kinase_CS"/>
</dbReference>
<dbReference type="InterPro" id="IPR027417">
    <property type="entry name" value="P-loop_NTPase"/>
</dbReference>
<dbReference type="InterPro" id="IPR006266">
    <property type="entry name" value="UMP_CMP_kinase"/>
</dbReference>
<dbReference type="NCBIfam" id="TIGR01359">
    <property type="entry name" value="UMP_CMP_kin_fam"/>
    <property type="match status" value="1"/>
</dbReference>
<dbReference type="PANTHER" id="PTHR23359">
    <property type="entry name" value="NUCLEOTIDE KINASE"/>
    <property type="match status" value="1"/>
</dbReference>
<dbReference type="Pfam" id="PF00406">
    <property type="entry name" value="ADK"/>
    <property type="match status" value="1"/>
</dbReference>
<dbReference type="PRINTS" id="PR00094">
    <property type="entry name" value="ADENYLTKNASE"/>
</dbReference>
<dbReference type="SUPFAM" id="SSF52540">
    <property type="entry name" value="P-loop containing nucleoside triphosphate hydrolases"/>
    <property type="match status" value="1"/>
</dbReference>
<dbReference type="PROSITE" id="PS00113">
    <property type="entry name" value="ADENYLATE_KINASE"/>
    <property type="match status" value="1"/>
</dbReference>
<protein>
    <recommendedName>
        <fullName evidence="1">UMP-CMP kinase</fullName>
        <ecNumber evidence="1">2.7.4.14</ecNumber>
    </recommendedName>
    <alternativeName>
        <fullName evidence="1">Deoxycytidylate kinase</fullName>
        <shortName evidence="1">CK</shortName>
        <shortName evidence="1">dCMP kinase</shortName>
    </alternativeName>
    <alternativeName>
        <fullName evidence="1">Uridine monophosphate/cytidine monophosphate kinase</fullName>
        <shortName evidence="1">UMP/CMP kinase</shortName>
        <shortName evidence="1">UMP/CMPK</shortName>
    </alternativeName>
</protein>
<keyword id="KW-0002">3D-structure</keyword>
<keyword id="KW-0067">ATP-binding</keyword>
<keyword id="KW-0963">Cytoplasm</keyword>
<keyword id="KW-0418">Kinase</keyword>
<keyword id="KW-0547">Nucleotide-binding</keyword>
<keyword id="KW-0539">Nucleus</keyword>
<keyword id="KW-0665">Pyrimidine biosynthesis</keyword>
<keyword id="KW-1185">Reference proteome</keyword>
<keyword id="KW-0808">Transferase</keyword>
<feature type="chain" id="PRO_0000158948" description="UMP-CMP kinase">
    <location>
        <begin position="1"/>
        <end position="195"/>
    </location>
</feature>
<feature type="region of interest" description="NMP" evidence="1 2 4 5">
    <location>
        <begin position="37"/>
        <end position="66"/>
    </location>
</feature>
<feature type="region of interest" description="LID" evidence="1 2 4 5">
    <location>
        <begin position="131"/>
        <end position="141"/>
    </location>
</feature>
<feature type="binding site" evidence="1 2 4 5">
    <location>
        <begin position="17"/>
        <end position="22"/>
    </location>
    <ligand>
        <name>ATP</name>
        <dbReference type="ChEBI" id="CHEBI:30616"/>
    </ligand>
</feature>
<feature type="binding site" evidence="1 2 4 5">
    <location>
        <position position="43"/>
    </location>
    <ligand>
        <name>a ribonucleoside 5'-phosphate</name>
        <dbReference type="ChEBI" id="CHEBI:58043"/>
    </ligand>
</feature>
<feature type="binding site" evidence="1 2 4 5">
    <location>
        <begin position="64"/>
        <end position="66"/>
    </location>
    <ligand>
        <name>a ribonucleoside 5'-phosphate</name>
        <dbReference type="ChEBI" id="CHEBI:58043"/>
    </ligand>
</feature>
<feature type="binding site" evidence="1 2 4 5">
    <location>
        <begin position="91"/>
        <end position="94"/>
    </location>
    <ligand>
        <name>a ribonucleoside 5'-phosphate</name>
        <dbReference type="ChEBI" id="CHEBI:58043"/>
    </ligand>
</feature>
<feature type="binding site" evidence="1 2 5">
    <location>
        <position position="98"/>
    </location>
    <ligand>
        <name>CMP</name>
        <dbReference type="ChEBI" id="CHEBI:60377"/>
    </ligand>
</feature>
<feature type="binding site" evidence="1 2 4 5">
    <location>
        <position position="132"/>
    </location>
    <ligand>
        <name>ATP</name>
        <dbReference type="ChEBI" id="CHEBI:30616"/>
    </ligand>
</feature>
<feature type="binding site" evidence="1 2 5">
    <location>
        <position position="138"/>
    </location>
    <ligand>
        <name>a ribonucleoside 5'-phosphate</name>
        <dbReference type="ChEBI" id="CHEBI:58043"/>
    </ligand>
</feature>
<feature type="binding site" evidence="1 2 4 5">
    <location>
        <position position="149"/>
    </location>
    <ligand>
        <name>a ribonucleoside 5'-phosphate</name>
        <dbReference type="ChEBI" id="CHEBI:58043"/>
    </ligand>
</feature>
<feature type="binding site" evidence="1 2 4 5">
    <location>
        <position position="177"/>
    </location>
    <ligand>
        <name>ATP</name>
        <dbReference type="ChEBI" id="CHEBI:30616"/>
    </ligand>
</feature>
<feature type="strand" evidence="10">
    <location>
        <begin position="8"/>
        <end position="15"/>
    </location>
</feature>
<feature type="helix" evidence="10">
    <location>
        <begin position="20"/>
        <end position="31"/>
    </location>
</feature>
<feature type="strand" evidence="10">
    <location>
        <begin position="34"/>
        <end position="37"/>
    </location>
</feature>
<feature type="helix" evidence="10">
    <location>
        <begin position="38"/>
        <end position="47"/>
    </location>
</feature>
<feature type="helix" evidence="10">
    <location>
        <begin position="53"/>
        <end position="61"/>
    </location>
</feature>
<feature type="helix" evidence="10">
    <location>
        <begin position="68"/>
        <end position="80"/>
    </location>
</feature>
<feature type="strand" evidence="10">
    <location>
        <begin position="87"/>
        <end position="90"/>
    </location>
</feature>
<feature type="helix" evidence="10">
    <location>
        <begin position="96"/>
        <end position="106"/>
    </location>
</feature>
<feature type="turn" evidence="10">
    <location>
        <begin position="107"/>
        <end position="109"/>
    </location>
</feature>
<feature type="strand" evidence="10">
    <location>
        <begin position="111"/>
        <end position="119"/>
    </location>
</feature>
<feature type="helix" evidence="10">
    <location>
        <begin position="122"/>
        <end position="133"/>
    </location>
</feature>
<feature type="turn" evidence="11">
    <location>
        <begin position="134"/>
        <end position="136"/>
    </location>
</feature>
<feature type="helix" evidence="10">
    <location>
        <begin position="143"/>
        <end position="155"/>
    </location>
</feature>
<feature type="helix" evidence="10">
    <location>
        <begin position="157"/>
        <end position="166"/>
    </location>
</feature>
<feature type="strand" evidence="10">
    <location>
        <begin position="170"/>
        <end position="174"/>
    </location>
</feature>
<feature type="helix" evidence="10">
    <location>
        <begin position="179"/>
        <end position="192"/>
    </location>
</feature>
<accession>P20425</accession>
<accession>Q54KA2</accession>
<name>KCY_DICDI</name>
<gene>
    <name evidence="1" type="primary">pyrK</name>
    <name type="synonym">ctpS</name>
    <name type="ORF">DDB_G0287495</name>
</gene>
<organism>
    <name type="scientific">Dictyostelium discoideum</name>
    <name type="common">Social amoeba</name>
    <dbReference type="NCBI Taxonomy" id="44689"/>
    <lineage>
        <taxon>Eukaryota</taxon>
        <taxon>Amoebozoa</taxon>
        <taxon>Evosea</taxon>
        <taxon>Eumycetozoa</taxon>
        <taxon>Dictyostelia</taxon>
        <taxon>Dictyosteliales</taxon>
        <taxon>Dictyosteliaceae</taxon>
        <taxon>Dictyostelium</taxon>
    </lineage>
</organism>
<comment type="function">
    <text evidence="1 3">Catalyzes the phosphorylation of pyrimidine nucleoside monophosphates at the expense of ATP. Plays an important role in de novo pyrimidine nucleotide biosynthesis. Has preference for UMP and CMP as phosphate acceptors.</text>
</comment>
<comment type="catalytic activity">
    <reaction evidence="1 3">
        <text>CMP + ATP = CDP + ADP</text>
        <dbReference type="Rhea" id="RHEA:11600"/>
        <dbReference type="ChEBI" id="CHEBI:30616"/>
        <dbReference type="ChEBI" id="CHEBI:58069"/>
        <dbReference type="ChEBI" id="CHEBI:60377"/>
        <dbReference type="ChEBI" id="CHEBI:456216"/>
        <dbReference type="EC" id="2.7.4.14"/>
    </reaction>
</comment>
<comment type="catalytic activity">
    <reaction evidence="1 3">
        <text>dCMP + ATP = dCDP + ADP</text>
        <dbReference type="Rhea" id="RHEA:25094"/>
        <dbReference type="ChEBI" id="CHEBI:30616"/>
        <dbReference type="ChEBI" id="CHEBI:57566"/>
        <dbReference type="ChEBI" id="CHEBI:58593"/>
        <dbReference type="ChEBI" id="CHEBI:456216"/>
        <dbReference type="EC" id="2.7.4.14"/>
    </reaction>
</comment>
<comment type="catalytic activity">
    <reaction evidence="1 3">
        <text>UMP + ATP = UDP + ADP</text>
        <dbReference type="Rhea" id="RHEA:24400"/>
        <dbReference type="ChEBI" id="CHEBI:30616"/>
        <dbReference type="ChEBI" id="CHEBI:57865"/>
        <dbReference type="ChEBI" id="CHEBI:58223"/>
        <dbReference type="ChEBI" id="CHEBI:456216"/>
        <dbReference type="EC" id="2.7.4.14"/>
    </reaction>
</comment>
<comment type="cofactor">
    <cofactor evidence="1 4">
        <name>Mg(2+)</name>
        <dbReference type="ChEBI" id="CHEBI:18420"/>
    </cofactor>
    <text evidence="1 4">Binds 1 Mg(2+) ion per monomer. The Mg(2+) ion binds to water and substrates.</text>
</comment>
<comment type="biophysicochemical properties">
    <kinetics>
        <KM evidence="3">25 uM for ATP</KM>
        <KM evidence="3">0.4 mM for UMP</KM>
        <KM evidence="3">0.1 mM for CMP</KM>
    </kinetics>
</comment>
<comment type="subunit">
    <text evidence="1 2 5">Monomer.</text>
</comment>
<comment type="subcellular location">
    <subcellularLocation>
        <location evidence="1">Cytoplasm</location>
    </subcellularLocation>
    <subcellularLocation>
        <location evidence="1">Nucleus</location>
    </subcellularLocation>
</comment>
<comment type="domain">
    <text evidence="1 7 8 9">Consists of three domains, a large central CORE domain and two small peripheral domains, NMPbind and LID, which undergo movements during catalysis. The LID domain closes over the site of phosphoryl transfer upon ATP binding. Assembling and dissambling the active center during each catalytic cycle provides an effective means to prevent ATP hydrolysis.</text>
</comment>
<comment type="similarity">
    <text evidence="1">Belongs to the adenylate kinase family. UMP-CMP kinase subfamily.</text>
</comment>
<comment type="sequence caution" evidence="6">
    <conflict type="erroneous initiation">
        <sequence resource="EMBL-CDS" id="AAA33272"/>
    </conflict>
</comment>
<sequence>MMEKSKPNVVFVLGGPGSGKGTQCANIVRDFGWVHLSAGDLLRQEQQSGSKDGEMIATMIKNGEIVPSIVTVKLLKNAIDANQGKNFLVDGFPRNEENNNSWEENMKDFVDTKFVLFFDCPEEVMTQRLLKRGESSGRSDDNIESIKKRFNTFNVQTKLVIDHYNKFDKVKIIPANRDVNEVYNDVENLFKSMGF</sequence>
<proteinExistence type="evidence at protein level"/>
<evidence type="ECO:0000255" key="1">
    <source>
        <dbReference type="HAMAP-Rule" id="MF_03172"/>
    </source>
</evidence>
<evidence type="ECO:0000269" key="2">
    <source>
    </source>
</evidence>
<evidence type="ECO:0000269" key="3">
    <source>
    </source>
</evidence>
<evidence type="ECO:0000269" key="4">
    <source>
    </source>
</evidence>
<evidence type="ECO:0000269" key="5">
    <source>
    </source>
</evidence>
<evidence type="ECO:0000305" key="6"/>
<evidence type="ECO:0000305" key="7">
    <source>
    </source>
</evidence>
<evidence type="ECO:0000305" key="8">
    <source>
    </source>
</evidence>
<evidence type="ECO:0000305" key="9">
    <source>
    </source>
</evidence>
<evidence type="ECO:0007829" key="10">
    <source>
        <dbReference type="PDB" id="1QF9"/>
    </source>
</evidence>
<evidence type="ECO:0007829" key="11">
    <source>
        <dbReference type="PDB" id="1UKE"/>
    </source>
</evidence>
<reference key="1">
    <citation type="journal article" date="1990" name="J. Biol. Chem.">
        <title>cDNA-derived sequence of UMP-CMP kinase from Dictyostelium discoideum and expression of the enzyme in Escherichia coli.</title>
        <authorList>
            <person name="Wiesmueller L."/>
            <person name="Noegel A.A."/>
            <person name="Barzu O."/>
            <person name="Gerisch G."/>
            <person name="Schleicher M."/>
        </authorList>
    </citation>
    <scope>NUCLEOTIDE SEQUENCE [MRNA]</scope>
    <scope>FUNCTION</scope>
    <scope>CATALYTIC ACTIVITY</scope>
    <scope>BIOPHYSICOCHEMICAL PROPERTIES</scope>
</reference>
<reference key="2">
    <citation type="journal article" date="2005" name="Nature">
        <title>The genome of the social amoeba Dictyostelium discoideum.</title>
        <authorList>
            <person name="Eichinger L."/>
            <person name="Pachebat J.A."/>
            <person name="Gloeckner G."/>
            <person name="Rajandream M.A."/>
            <person name="Sucgang R."/>
            <person name="Berriman M."/>
            <person name="Song J."/>
            <person name="Olsen R."/>
            <person name="Szafranski K."/>
            <person name="Xu Q."/>
            <person name="Tunggal B."/>
            <person name="Kummerfeld S."/>
            <person name="Madera M."/>
            <person name="Konfortov B.A."/>
            <person name="Rivero F."/>
            <person name="Bankier A.T."/>
            <person name="Lehmann R."/>
            <person name="Hamlin N."/>
            <person name="Davies R."/>
            <person name="Gaudet P."/>
            <person name="Fey P."/>
            <person name="Pilcher K."/>
            <person name="Chen G."/>
            <person name="Saunders D."/>
            <person name="Sodergren E.J."/>
            <person name="Davis P."/>
            <person name="Kerhornou A."/>
            <person name="Nie X."/>
            <person name="Hall N."/>
            <person name="Anjard C."/>
            <person name="Hemphill L."/>
            <person name="Bason N."/>
            <person name="Farbrother P."/>
            <person name="Desany B."/>
            <person name="Just E."/>
            <person name="Morio T."/>
            <person name="Rost R."/>
            <person name="Churcher C.M."/>
            <person name="Cooper J."/>
            <person name="Haydock S."/>
            <person name="van Driessche N."/>
            <person name="Cronin A."/>
            <person name="Goodhead I."/>
            <person name="Muzny D.M."/>
            <person name="Mourier T."/>
            <person name="Pain A."/>
            <person name="Lu M."/>
            <person name="Harper D."/>
            <person name="Lindsay R."/>
            <person name="Hauser H."/>
            <person name="James K.D."/>
            <person name="Quiles M."/>
            <person name="Madan Babu M."/>
            <person name="Saito T."/>
            <person name="Buchrieser C."/>
            <person name="Wardroper A."/>
            <person name="Felder M."/>
            <person name="Thangavelu M."/>
            <person name="Johnson D."/>
            <person name="Knights A."/>
            <person name="Loulseged H."/>
            <person name="Mungall K.L."/>
            <person name="Oliver K."/>
            <person name="Price C."/>
            <person name="Quail M.A."/>
            <person name="Urushihara H."/>
            <person name="Hernandez J."/>
            <person name="Rabbinowitsch E."/>
            <person name="Steffen D."/>
            <person name="Sanders M."/>
            <person name="Ma J."/>
            <person name="Kohara Y."/>
            <person name="Sharp S."/>
            <person name="Simmonds M.N."/>
            <person name="Spiegler S."/>
            <person name="Tivey A."/>
            <person name="Sugano S."/>
            <person name="White B."/>
            <person name="Walker D."/>
            <person name="Woodward J.R."/>
            <person name="Winckler T."/>
            <person name="Tanaka Y."/>
            <person name="Shaulsky G."/>
            <person name="Schleicher M."/>
            <person name="Weinstock G.M."/>
            <person name="Rosenthal A."/>
            <person name="Cox E.C."/>
            <person name="Chisholm R.L."/>
            <person name="Gibbs R.A."/>
            <person name="Loomis W.F."/>
            <person name="Platzer M."/>
            <person name="Kay R.R."/>
            <person name="Williams J.G."/>
            <person name="Dear P.H."/>
            <person name="Noegel A.A."/>
            <person name="Barrell B.G."/>
            <person name="Kuspa A."/>
        </authorList>
    </citation>
    <scope>NUCLEOTIDE SEQUENCE [LARGE SCALE GENOMIC DNA]</scope>
    <source>
        <strain>AX4</strain>
    </source>
</reference>
<reference key="3">
    <citation type="journal article" date="1996" name="Biochemistry">
        <title>Crystal structure of the complex of UMP/CMP kinase from Dictyostelium discoideum and the bisubstrate inhibitor P1-(5'-adenosyl) P5-(5'-uridyl) pentaphosphate (UP5A) and Mg2+ at 2.2-A: implications for water-mediated specificity.</title>
        <authorList>
            <person name="Scheffzek K."/>
            <person name="Kliche W."/>
            <person name="Wiesmuller L."/>
            <person name="Reinstein J."/>
        </authorList>
    </citation>
    <scope>X-RAY CRYSTALLOGRAPHY (2.0 ANGSTROMS) OF 2-195 IN COMPLEXES WITH SUBSTRATE ANALOGS</scope>
    <scope>COFACTOR</scope>
</reference>
<reference key="4">
    <citation type="journal article" date="1997" name="Biochemistry">
        <title>Structures of active conformations of UMP kinase from Dictyostelium discoideum suggest phosphoryl transfer is associative.</title>
        <authorList>
            <person name="Schlichting I."/>
            <person name="Reinstein J."/>
        </authorList>
    </citation>
    <scope>X-RAY CRYSTALLOGRAPHY (2.2 ANGSTROMS) OF 2-195IN COMPLEX WITH ADP; CMP AND UDP</scope>
</reference>
<reference key="5">
    <citation type="journal article" date="1999" name="Nat. Struct. Biol.">
        <title>pH influences fluoride coordination number of the AlFx phosphoryl transfer transition state analog.</title>
        <authorList>
            <person name="Schlichting I."/>
            <person name="Reinstein J."/>
        </authorList>
    </citation>
    <scope>X-RAY CRYSTALLOGRAPHY (1.70 ANGSTROMS) OF 2-194 IN COMPLEX WITH ADP AND CMP</scope>
</reference>